<keyword id="KW-0002">3D-structure</keyword>
<keyword id="KW-0891">Chondrogenesis</keyword>
<keyword id="KW-0209">Deafness</keyword>
<keyword id="KW-0217">Developmental protein</keyword>
<keyword id="KW-0221">Differentiation</keyword>
<keyword id="KW-0225">Disease variant</keyword>
<keyword id="KW-1015">Disulfide bond</keyword>
<keyword id="KW-0325">Glycoprotein</keyword>
<keyword id="KW-1267">Proteomics identification</keyword>
<keyword id="KW-1185">Reference proteome</keyword>
<keyword id="KW-0964">Secreted</keyword>
<keyword id="KW-0732">Signal</keyword>
<protein>
    <recommendedName>
        <fullName>Noggin</fullName>
    </recommendedName>
</protein>
<gene>
    <name type="primary">NOG</name>
</gene>
<organism>
    <name type="scientific">Homo sapiens</name>
    <name type="common">Human</name>
    <dbReference type="NCBI Taxonomy" id="9606"/>
    <lineage>
        <taxon>Eukaryota</taxon>
        <taxon>Metazoa</taxon>
        <taxon>Chordata</taxon>
        <taxon>Craniata</taxon>
        <taxon>Vertebrata</taxon>
        <taxon>Euteleostomi</taxon>
        <taxon>Mammalia</taxon>
        <taxon>Eutheria</taxon>
        <taxon>Euarchontoglires</taxon>
        <taxon>Primates</taxon>
        <taxon>Haplorrhini</taxon>
        <taxon>Catarrhini</taxon>
        <taxon>Hominidae</taxon>
        <taxon>Homo</taxon>
    </lineage>
</organism>
<accession>Q13253</accession>
<feature type="signal peptide" evidence="1">
    <location>
        <begin position="1"/>
        <end position="27"/>
    </location>
</feature>
<feature type="chain" id="PRO_0000019813" description="Noggin">
    <location>
        <begin position="28"/>
        <end position="232"/>
    </location>
</feature>
<feature type="region of interest" description="Disordered" evidence="2">
    <location>
        <begin position="77"/>
        <end position="96"/>
    </location>
</feature>
<feature type="glycosylation site" description="N-linked (GlcNAc...) asparagine" evidence="1">
    <location>
        <position position="62"/>
    </location>
</feature>
<feature type="disulfide bond" evidence="8">
    <location>
        <begin position="155"/>
        <end position="192"/>
    </location>
</feature>
<feature type="disulfide bond" evidence="8">
    <location>
        <begin position="178"/>
        <end position="228"/>
    </location>
</feature>
<feature type="disulfide bond" evidence="8">
    <location>
        <begin position="184"/>
        <end position="230"/>
    </location>
</feature>
<feature type="disulfide bond" evidence="8">
    <location>
        <begin position="207"/>
        <end position="215"/>
    </location>
</feature>
<feature type="sequence variant" id="VAR_036997" description="In BDB2; dbSNP:rs28937580." evidence="10">
    <original>P</original>
    <variation>A</variation>
    <location>
        <position position="35"/>
    </location>
</feature>
<feature type="sequence variant" id="VAR_011361" description="In SYM1A and TCC; dbSNP:rs104894611." evidence="3 4">
    <original>P</original>
    <variation>R</variation>
    <location>
        <position position="35"/>
    </location>
</feature>
<feature type="sequence variant" id="VAR_018324" description="In SYM1A and BDB2; dbSNP:rs28937580." evidence="6 10">
    <original>P</original>
    <variation>S</variation>
    <location>
        <position position="35"/>
    </location>
</feature>
<feature type="sequence variant" id="VAR_036998" description="In BDB2." evidence="10">
    <original>A</original>
    <variation>P</variation>
    <location>
        <position position="36"/>
    </location>
</feature>
<feature type="sequence variant" id="VAR_036999" description="In BDB2; dbSNP:rs2145567107." evidence="10">
    <original>E</original>
    <variation>K</variation>
    <location>
        <position position="48"/>
    </location>
</feature>
<feature type="sequence variant" id="VAR_084488" description="Found in a family with radioulnar synostosis; uncertain significance." evidence="15">
    <original>P</original>
    <variation>L</variation>
    <location>
        <position position="83"/>
    </location>
</feature>
<feature type="sequence variant" id="VAR_084489" description="Found in a case of radioulnar synostosis; uncertain significance." evidence="15">
    <original>L</original>
    <variation>M</variation>
    <location>
        <position position="104"/>
    </location>
</feature>
<feature type="sequence variant" id="VAR_037000" description="In BDB2; dbSNP:rs121908949." evidence="10">
    <original>R</original>
    <variation>G</variation>
    <location>
        <position position="167"/>
    </location>
</feature>
<feature type="sequence variant" id="VAR_018325" description="In SYM1A; sporadic; de novo mutation; dbSNP:rs104894612." evidence="5">
    <original>C</original>
    <variation>Y</variation>
    <location>
        <position position="184"/>
    </location>
</feature>
<feature type="sequence variant" id="VAR_037001" description="In BDB2." evidence="10">
    <original>P</original>
    <variation>S</variation>
    <location>
        <position position="187"/>
    </location>
</feature>
<feature type="sequence variant" id="VAR_011362" description="In SYM1A; dbSNP:rs104894609." evidence="3">
    <original>G</original>
    <variation>C</variation>
    <location>
        <position position="189"/>
    </location>
</feature>
<feature type="sequence variant" id="VAR_018326" description="In TCC; dbSNP:rs104894610." evidence="4">
    <original>R</original>
    <variation>L</variation>
    <location>
        <position position="204"/>
    </location>
</feature>
<feature type="sequence variant" id="VAR_037605" description="In SYM1A; dbSNP:rs104894615." evidence="9">
    <original>W</original>
    <variation>C</variation>
    <location>
        <position position="205"/>
    </location>
</feature>
<feature type="sequence variant" id="VAR_011363" description="In SYNS1; dbSNP:rs104894603." evidence="3">
    <original>W</original>
    <variation>G</variation>
    <location>
        <position position="217"/>
    </location>
</feature>
<feature type="sequence variant" id="VAR_011364" description="In SYM1A." evidence="3">
    <original>I</original>
    <variation>N</variation>
    <location>
        <position position="220"/>
    </location>
</feature>
<feature type="sequence variant" id="VAR_011365" description="In SYM1A and TCC; dbSNP:rs104894602." evidence="3 4">
    <original>Y</original>
    <variation>C</variation>
    <location>
        <position position="222"/>
    </location>
</feature>
<feature type="sequence variant" id="VAR_011366" description="In SYM1A; dbSNP:rs121908948." evidence="3">
    <original>Y</original>
    <variation>D</variation>
    <location>
        <position position="222"/>
    </location>
</feature>
<feature type="sequence variant" id="VAR_011367" description="In SYM1A; dbSNP:rs104894608." evidence="3">
    <original>P</original>
    <variation>L</variation>
    <location>
        <position position="223"/>
    </location>
</feature>
<feature type="sequence variant" id="VAR_064541" description="In SYNS1; dbSNP:rs387906844." evidence="11">
    <original>C</original>
    <variation>W</variation>
    <location>
        <position position="232"/>
    </location>
</feature>
<feature type="strand" evidence="17">
    <location>
        <begin position="29"/>
        <end position="32"/>
    </location>
</feature>
<feature type="helix" evidence="17">
    <location>
        <begin position="58"/>
        <end position="60"/>
    </location>
</feature>
<feature type="helix" evidence="17">
    <location>
        <begin position="63"/>
        <end position="70"/>
    </location>
</feature>
<feature type="helix" evidence="17">
    <location>
        <begin position="71"/>
        <end position="73"/>
    </location>
</feature>
<feature type="turn" evidence="17">
    <location>
        <begin position="76"/>
        <end position="78"/>
    </location>
</feature>
<feature type="strand" evidence="17">
    <location>
        <begin position="79"/>
        <end position="82"/>
    </location>
</feature>
<feature type="helix" evidence="17">
    <location>
        <begin position="99"/>
        <end position="109"/>
    </location>
</feature>
<feature type="helix" evidence="17">
    <location>
        <begin position="118"/>
        <end position="121"/>
    </location>
</feature>
<feature type="strand" evidence="17">
    <location>
        <begin position="129"/>
        <end position="131"/>
    </location>
</feature>
<feature type="helix" evidence="17">
    <location>
        <begin position="139"/>
        <end position="153"/>
    </location>
</feature>
<feature type="strand" evidence="17">
    <location>
        <begin position="158"/>
        <end position="163"/>
    </location>
</feature>
<feature type="strand" evidence="17">
    <location>
        <begin position="168"/>
        <end position="177"/>
    </location>
</feature>
<feature type="strand" evidence="17">
    <location>
        <begin position="185"/>
        <end position="188"/>
    </location>
</feature>
<feature type="strand" evidence="17">
    <location>
        <begin position="191"/>
        <end position="207"/>
    </location>
</feature>
<feature type="helix" evidence="17">
    <location>
        <begin position="210"/>
        <end position="212"/>
    </location>
</feature>
<feature type="strand" evidence="17">
    <location>
        <begin position="214"/>
        <end position="231"/>
    </location>
</feature>
<comment type="function">
    <text evidence="8 12 14">Inhibitor of bone morphogenetic proteins (BMP) signaling which is required for growth and patterning of the neural tube and somite. Essential for cartilage morphogenesis and joint formation. Inhibits chondrocyte differentiation through its interaction with GDF5 and, probably, GDF6 (PubMed:21976273, PubMed:26643732).</text>
</comment>
<comment type="subunit">
    <text evidence="8 12 13">Homodimer. Interacts with GDF5; inhibits chondrocyte differentiation.</text>
</comment>
<comment type="interaction">
    <interactant intactId="EBI-1035205">
        <id>Q13253</id>
    </interactant>
    <interactant intactId="EBI-1029262">
        <id>P12643</id>
        <label>BMP2</label>
    </interactant>
    <organismsDiffer>false</organismsDiffer>
    <experiments>2</experiments>
</comment>
<comment type="subcellular location">
    <subcellularLocation>
        <location>Secreted</location>
    </subcellularLocation>
</comment>
<comment type="disease" evidence="3 5 6 9">
    <disease id="DI-02350">
        <name>Symphalangism, proximal 1A</name>
        <acronym>SYM1A</acronym>
        <description>A disease characterized by the hereditary absence of the proximal interphalangeal joints. Distal interphalangeal joints are less frequently involved and metacarpophalangeal joints are rarely affected whereas carpal bone malformation and fusion are common. In the lower extremities, tarsal bone coalition is common. Conductive hearing loss is seen and is due to fusion of the stapes to the petrous part of the temporal bone.</description>
        <dbReference type="MIM" id="185800"/>
    </disease>
    <text>The disease is caused by variants affecting the gene represented in this entry.</text>
</comment>
<comment type="disease" evidence="3 11">
    <disease id="DI-02010">
        <name>Multiple synostoses syndrome 1</name>
        <acronym>SYNS1</acronym>
        <description>A bone disease characterized by multiple progressive joint fusions that commonly involve proximal interphalangeal, tarsal-carpal, humeroradial and cervical spine joints. Additional features can include progressive conductive deafness and facial dysmorphism.</description>
        <dbReference type="MIM" id="186500"/>
    </disease>
    <text>The disease is caused by variants affecting the gene represented in this entry.</text>
</comment>
<comment type="disease" evidence="4">
    <disease id="DI-02359">
        <name>Tarsal-carpal coalition syndrome</name>
        <acronym>TCC</acronym>
        <description>Autosomal dominant disorder characterized by fusion of the carpals, tarsals and phalanges, short first metacarpals causing brachydactyly, and humeroradial fusion. TCC is allelic to SYM1, and different mutations in NOG can result in either TCC or SYM1 in different families.</description>
        <dbReference type="MIM" id="186570"/>
    </disease>
    <text>The disease is caused by variants affecting the gene represented in this entry.</text>
</comment>
<comment type="disease" evidence="7">
    <disease id="DI-02339">
        <name>Stapes ankylosis with broad thumb and toes</name>
        <acronym>SABTS</acronym>
        <description>An autosomal dominant disorder characterized by hyperopia, a hemicylindrical nose, broad thumbs, great toes, and other minor skeletal anomalies but lacked carpal and tarsal fusion and symphalangism.</description>
        <dbReference type="MIM" id="184460"/>
    </disease>
    <text>The disease is caused by variants affecting the gene represented in this entry.</text>
</comment>
<comment type="disease" evidence="10">
    <disease id="DI-02844">
        <name>Brachydactyly B2</name>
        <acronym>BDB2</acronym>
        <description>A form of brachydactyly characterized by hypoplasia/aplasia of distal phalanges in combination with distal symphalangism, fusion of carpal/tarsal bones and partial cutaneous syndactyly.</description>
        <dbReference type="MIM" id="611377"/>
    </disease>
    <text>The disease is caused by variants affecting the gene represented in this entry.</text>
</comment>
<comment type="similarity">
    <text evidence="16">Belongs to the noggin family.</text>
</comment>
<reference key="1">
    <citation type="journal article" date="1995" name="J. Neurosci.">
        <title>Identification of mammalian noggin and its expression in the adult nervous system.</title>
        <authorList>
            <person name="Valenzuela D.M."/>
            <person name="Economides A.N."/>
            <person name="Rojas E."/>
            <person name="Lamb T.M."/>
            <person name="Nunez L."/>
            <person name="Jones P."/>
            <person name="Ip N.Y."/>
            <person name="Espinosa R. III"/>
            <person name="Brannan C.I."/>
            <person name="Gilbert D.J."/>
            <person name="Copeland N.G."/>
            <person name="Jenkins N.A."/>
            <person name="Le Beau M.M."/>
            <person name="Harland R.M."/>
            <person name="Yancopoulos G.D."/>
        </authorList>
    </citation>
    <scope>NUCLEOTIDE SEQUENCE [GENOMIC DNA]</scope>
    <source>
        <tissue>Placenta</tissue>
        <tissue>Temporal cortex</tissue>
    </source>
</reference>
<reference key="2">
    <citation type="journal article" date="2004" name="Genome Res.">
        <title>The status, quality, and expansion of the NIH full-length cDNA project: the Mammalian Gene Collection (MGC).</title>
        <authorList>
            <consortium name="The MGC Project Team"/>
        </authorList>
    </citation>
    <scope>NUCLEOTIDE SEQUENCE [LARGE SCALE MRNA]</scope>
    <source>
        <tissue>Prostate</tissue>
    </source>
</reference>
<reference key="3">
    <citation type="journal article" date="2012" name="J. Bone Miner. Res.">
        <title>New insights into the molecular mechanism of multiple synostoses syndrome (SYNS): mutation within the GDF5 knuckle epitope causes noggin-resistance.</title>
        <authorList>
            <person name="Schwaerzer G.K."/>
            <person name="Hiepen C."/>
            <person name="Schrewe H."/>
            <person name="Nickel J."/>
            <person name="Ploeger F."/>
            <person name="Sebald W."/>
            <person name="Mueller T."/>
            <person name="Knaus P."/>
        </authorList>
    </citation>
    <scope>INTERACTION WITH GDF5</scope>
    <scope>FUNCTION</scope>
</reference>
<reference key="4">
    <citation type="journal article" date="2013" name="PLoS Genet.">
        <title>A GDF5 point mutation strikes twice--causing BDA1 and SYNS2.</title>
        <authorList>
            <person name="Degenkolbe E."/>
            <person name="Konig J."/>
            <person name="Zimmer J."/>
            <person name="Walther M."/>
            <person name="Reissner C."/>
            <person name="Nickel J."/>
            <person name="Ploger F."/>
            <person name="Raspopovic J."/>
            <person name="Sharpe J."/>
            <person name="Dathe K."/>
            <person name="Hecht J.T."/>
            <person name="Mundlos S."/>
            <person name="Doelken S.C."/>
            <person name="Seemann P."/>
        </authorList>
    </citation>
    <scope>INTERACTION WITH GDF5</scope>
</reference>
<reference key="5">
    <citation type="journal article" date="2016" name="J. Bone Miner. Res.">
        <title>A New Subtype of Multiple-Synostoses Syndrome is Caused by a Mutation in GDF6 that Decreases its Sensitivity to Noggin and Enhances its Potency as a BMP Signal.</title>
        <authorList>
            <person name="Wang J."/>
            <person name="Yu T."/>
            <person name="Wang Z."/>
            <person name="Ohte S."/>
            <person name="Yao R.E."/>
            <person name="Zheng Z."/>
            <person name="Geng J."/>
            <person name="Cai H."/>
            <person name="Ge Y."/>
            <person name="Li Y."/>
            <person name="Xu Y."/>
            <person name="Zhang Q."/>
            <person name="Gusella J.F."/>
            <person name="Fu Q."/>
            <person name="Pregizer S."/>
            <person name="Rosen V."/>
            <person name="Shen Y."/>
        </authorList>
    </citation>
    <scope>FUNCTION</scope>
</reference>
<reference key="6">
    <citation type="journal article" date="2019" name="Genet. Med.">
        <title>SMAD6 is frequently mutated in nonsyndromic radioulnar synostosis.</title>
        <authorList>
            <person name="Yang Y."/>
            <person name="Zheng Y."/>
            <person name="Li W."/>
            <person name="Li L."/>
            <person name="Tu M."/>
            <person name="Zhao L."/>
            <person name="Mei H."/>
            <person name="Zhu G."/>
            <person name="Zhu Y."/>
        </authorList>
    </citation>
    <scope>VARIANTS LEU-83 AND MET-104</scope>
</reference>
<reference key="7">
    <citation type="journal article" date="2002" name="Nature">
        <title>Structural basis of BMP signalling inhibition by the cystine knot protein Noggin.</title>
        <authorList>
            <person name="Groppe J."/>
            <person name="Greenwald J."/>
            <person name="Wiater E."/>
            <person name="Rodriguez-Leon J."/>
            <person name="Economides A.N."/>
            <person name="Kwiatkowski W."/>
            <person name="Affolter M."/>
            <person name="Vale W.W."/>
            <person name="Izpisua Belmonte J.C."/>
            <person name="Choe S."/>
        </authorList>
    </citation>
    <scope>X-RAY CRYSTALLOGRAPHY (2.42 ANGSTROMS) OF 28-232 IN COMPLEX WITH BMP7</scope>
    <scope>FUNCTION</scope>
    <scope>SUBUNIT</scope>
    <scope>DISULFIDE BONDS</scope>
</reference>
<reference key="8">
    <citation type="journal article" date="1999" name="Nat. Genet.">
        <title>Heterozygous mutations in the gene encoding noggin affect human joint morphogenesis.</title>
        <authorList>
            <person name="Gong Y."/>
            <person name="Krakow D."/>
            <person name="Marcelino J."/>
            <person name="Wilkin D."/>
            <person name="Chitayat D."/>
            <person name="Babul-Hirji R."/>
            <person name="Hudgins L."/>
            <person name="Cremers C.W."/>
            <person name="Cremers F.P.M."/>
            <person name="Brunner H.G."/>
            <person name="Reinker K."/>
            <person name="Rimoin D.L."/>
            <person name="Cohn D.H."/>
            <person name="Goodman F.R."/>
            <person name="Reardon W."/>
            <person name="Patton M."/>
            <person name="Francomano C.A."/>
            <person name="Warman M.L."/>
        </authorList>
    </citation>
    <scope>VARIANTS SYM1A ARG-35; CYS-189; ASN-220; CYS-222; ASP-222 AND LEU-223</scope>
    <scope>VARIANT SYNS1 GLY-217</scope>
</reference>
<reference key="9">
    <citation type="journal article" date="2001" name="Clin. Genet.">
        <title>Mutations of the NOG gene in individuals with proximal symphalangism and multiple synostosis syndrome.</title>
        <authorList>
            <person name="Takahashi T."/>
            <person name="Takahashi I."/>
            <person name="Komatsu M."/>
            <person name="Sawaishi Y."/>
            <person name="Higashi K."/>
            <person name="Nishimura G."/>
            <person name="Saito H."/>
            <person name="Takada G."/>
        </authorList>
    </citation>
    <scope>VARIANT SYM1A TYR-184</scope>
</reference>
<reference key="10">
    <citation type="journal article" date="2001" name="Genet. Med.">
        <title>Identical mutations in NOG can cause either tarsal/carpal coalition syndrome or proximal symphalangism.</title>
        <authorList>
            <person name="Dixon M.E."/>
            <person name="Armstrong P."/>
            <person name="Stevens D.B."/>
            <person name="Bamshad M."/>
        </authorList>
    </citation>
    <scope>VARIANTS TCC ARG-35; LEU-204 AND CYS-222</scope>
</reference>
<reference key="11">
    <citation type="journal article" date="2002" name="Am. J. Hum. Genet.">
        <title>Autosomal dominant stapes ankylosis with broad thumbs and toes, hyperopia, and skeletal anomalies is caused by heterozygous nonsense and frameshift mutations in NOG, the gene encoding noggin.</title>
        <authorList>
            <person name="Brown D.J."/>
            <person name="Kim T.B."/>
            <person name="Petty E.M."/>
            <person name="Downs C.A."/>
            <person name="Martin D.M."/>
            <person name="Strouse P.J."/>
            <person name="Moroi S.E."/>
            <person name="Milunsky J.M."/>
            <person name="Lesperance M.M."/>
        </authorList>
    </citation>
    <scope>INVOLVEMENT IN SABTS</scope>
</reference>
<reference key="12">
    <citation type="journal article" date="2002" name="Hum. Mutat.">
        <title>Identification of a novel NOG gene mutation (P35S) in an Italian family with symphalangism.</title>
        <authorList>
            <person name="Mangino M."/>
            <person name="Flex E."/>
            <person name="Digilio M.C."/>
            <person name="Giannotti A."/>
            <person name="Dallapiccola B."/>
        </authorList>
    </citation>
    <scope>VARIANT SYM1A SER-35</scope>
</reference>
<reference key="13">
    <citation type="journal article" date="2005" name="Clin. Dysmorphol.">
        <title>The facio-audio-symphalangism syndrome in a four generation family with a nonsense mutation in the NOG-gene.</title>
        <authorList>
            <person name="van den Ende J.J."/>
            <person name="Mattelaer P."/>
            <person name="Declau F."/>
            <person name="Vanhoenacker F."/>
            <person name="Claes J."/>
            <person name="Van Hul E."/>
            <person name="Baten E."/>
        </authorList>
    </citation>
    <scope>VARIANT SYM1A CYS-205</scope>
</reference>
<reference key="14">
    <citation type="journal article" date="2007" name="Am. J. Hum. Genet.">
        <title>A new subtype of brachydactyly type B caused by point mutations in the bone morphogenetic protein antagonist NOGGIN.</title>
        <authorList>
            <person name="Lehmann K."/>
            <person name="Seemann P."/>
            <person name="Silan F."/>
            <person name="Goecke T.O."/>
            <person name="Irgang S."/>
            <person name="Kjaer K.W."/>
            <person name="Kjaergaard S."/>
            <person name="Mahoney M.J."/>
            <person name="Morlot S."/>
            <person name="Reissner C."/>
            <person name="Kerr B."/>
            <person name="Wilkie A.O.M."/>
            <person name="Mundlos S."/>
        </authorList>
    </citation>
    <scope>VARIANTS BDB2 ALA-35; SER-35; PRO-36; LYS-48; GLY-167 AND SER-187</scope>
</reference>
<reference key="15">
    <citation type="journal article" date="2010" name="Am. J. Med. Genet. A">
        <title>Facioaudiosymphalangism syndrome and growth acceleration associated with a heterozygous NOG mutation.</title>
        <authorList>
            <person name="Rudnik-Schoneborn S."/>
            <person name="Takahashi T."/>
            <person name="Busse S."/>
            <person name="Schmidt T."/>
            <person name="Senderek J."/>
            <person name="Eggermann T."/>
            <person name="Zerres K."/>
        </authorList>
    </citation>
    <scope>VARIANT SYNS1 TRP-232</scope>
</reference>
<evidence type="ECO:0000255" key="1"/>
<evidence type="ECO:0000256" key="2">
    <source>
        <dbReference type="SAM" id="MobiDB-lite"/>
    </source>
</evidence>
<evidence type="ECO:0000269" key="3">
    <source>
    </source>
</evidence>
<evidence type="ECO:0000269" key="4">
    <source>
    </source>
</evidence>
<evidence type="ECO:0000269" key="5">
    <source>
    </source>
</evidence>
<evidence type="ECO:0000269" key="6">
    <source>
    </source>
</evidence>
<evidence type="ECO:0000269" key="7">
    <source>
    </source>
</evidence>
<evidence type="ECO:0000269" key="8">
    <source>
    </source>
</evidence>
<evidence type="ECO:0000269" key="9">
    <source>
    </source>
</evidence>
<evidence type="ECO:0000269" key="10">
    <source>
    </source>
</evidence>
<evidence type="ECO:0000269" key="11">
    <source>
    </source>
</evidence>
<evidence type="ECO:0000269" key="12">
    <source>
    </source>
</evidence>
<evidence type="ECO:0000269" key="13">
    <source>
    </source>
</evidence>
<evidence type="ECO:0000269" key="14">
    <source>
    </source>
</evidence>
<evidence type="ECO:0000269" key="15">
    <source>
    </source>
</evidence>
<evidence type="ECO:0000305" key="16"/>
<evidence type="ECO:0007829" key="17">
    <source>
        <dbReference type="PDB" id="1M4U"/>
    </source>
</evidence>
<proteinExistence type="evidence at protein level"/>
<name>NOGG_HUMAN</name>
<sequence length="232" mass="25774">MERCPSLGVTLYALVVVLGLRATPAGGQHYLHIRPAPSDNLPLVDLIEHPDPIFDPKEKDLNETLLRSLLGGHYDPGFMATSPPEDRPGGGGGAAGGAEDLAELDQLLRQRPSGAMPSEIKGLEFSEGLAQGKKQRLSKKLRRKLQMWLWSQTFCPVLYAWNDLGSRFWPRYVKVGSCFSKRSCSVPEGMVCKPSKSVHLTVLRWRCQRRGGQRCGWIPIQYPIISECKCSC</sequence>
<dbReference type="EMBL" id="U31202">
    <property type="protein sequence ID" value="AAA83259.1"/>
    <property type="molecule type" value="Genomic_DNA"/>
</dbReference>
<dbReference type="EMBL" id="BC034027">
    <property type="protein sequence ID" value="AAH34027.1"/>
    <property type="molecule type" value="mRNA"/>
</dbReference>
<dbReference type="CCDS" id="CCDS11589.1"/>
<dbReference type="RefSeq" id="NP_005441.1">
    <property type="nucleotide sequence ID" value="NM_005450.6"/>
</dbReference>
<dbReference type="PDB" id="1M4U">
    <property type="method" value="X-ray"/>
    <property type="resolution" value="2.42 A"/>
    <property type="chains" value="A=28-232"/>
</dbReference>
<dbReference type="PDB" id="7AG0">
    <property type="method" value="X-ray"/>
    <property type="resolution" value="3.10 A"/>
    <property type="chains" value="A=28-232"/>
</dbReference>
<dbReference type="PDBsum" id="1M4U"/>
<dbReference type="PDBsum" id="7AG0"/>
<dbReference type="SMR" id="Q13253"/>
<dbReference type="BioGRID" id="114668">
    <property type="interactions" value="43"/>
</dbReference>
<dbReference type="FunCoup" id="Q13253">
    <property type="interactions" value="359"/>
</dbReference>
<dbReference type="IntAct" id="Q13253">
    <property type="interactions" value="42"/>
</dbReference>
<dbReference type="MINT" id="Q13253"/>
<dbReference type="STRING" id="9606.ENSP00000328181"/>
<dbReference type="GlyCosmos" id="Q13253">
    <property type="glycosylation" value="2 sites, 1 glycan"/>
</dbReference>
<dbReference type="GlyGen" id="Q13253">
    <property type="glycosylation" value="2 sites, 1 N-linked glycan (1 site), 1 O-linked glycan (1 site)"/>
</dbReference>
<dbReference type="iPTMnet" id="Q13253"/>
<dbReference type="PhosphoSitePlus" id="Q13253"/>
<dbReference type="BioMuta" id="NOG"/>
<dbReference type="DMDM" id="15214099"/>
<dbReference type="MassIVE" id="Q13253"/>
<dbReference type="PaxDb" id="9606-ENSP00000328181"/>
<dbReference type="PeptideAtlas" id="Q13253"/>
<dbReference type="ProteomicsDB" id="59253"/>
<dbReference type="Pumba" id="Q13253"/>
<dbReference type="Antibodypedia" id="3149">
    <property type="antibodies" value="574 antibodies from 35 providers"/>
</dbReference>
<dbReference type="DNASU" id="9241"/>
<dbReference type="Ensembl" id="ENST00000332822.6">
    <property type="protein sequence ID" value="ENSP00000328181.4"/>
    <property type="gene ID" value="ENSG00000183691.6"/>
</dbReference>
<dbReference type="GeneID" id="9241"/>
<dbReference type="KEGG" id="hsa:9241"/>
<dbReference type="MANE-Select" id="ENST00000332822.6">
    <property type="protein sequence ID" value="ENSP00000328181.4"/>
    <property type="RefSeq nucleotide sequence ID" value="NM_005450.6"/>
    <property type="RefSeq protein sequence ID" value="NP_005441.1"/>
</dbReference>
<dbReference type="UCSC" id="uc002iup.2">
    <property type="organism name" value="human"/>
</dbReference>
<dbReference type="AGR" id="HGNC:7866"/>
<dbReference type="CTD" id="9241"/>
<dbReference type="DisGeNET" id="9241"/>
<dbReference type="GeneCards" id="NOG"/>
<dbReference type="HGNC" id="HGNC:7866">
    <property type="gene designation" value="NOG"/>
</dbReference>
<dbReference type="HPA" id="ENSG00000183691">
    <property type="expression patterns" value="Tissue enhanced (brain, placenta)"/>
</dbReference>
<dbReference type="MalaCards" id="NOG"/>
<dbReference type="MIM" id="184460">
    <property type="type" value="phenotype"/>
</dbReference>
<dbReference type="MIM" id="185800">
    <property type="type" value="phenotype"/>
</dbReference>
<dbReference type="MIM" id="186500">
    <property type="type" value="phenotype"/>
</dbReference>
<dbReference type="MIM" id="186570">
    <property type="type" value="phenotype"/>
</dbReference>
<dbReference type="MIM" id="602991">
    <property type="type" value="gene"/>
</dbReference>
<dbReference type="MIM" id="611377">
    <property type="type" value="phenotype"/>
</dbReference>
<dbReference type="neXtProt" id="NX_Q13253"/>
<dbReference type="OpenTargets" id="ENSG00000183691"/>
<dbReference type="Orphanet" id="140908">
    <property type="disease" value="Brachydactyly type B2"/>
</dbReference>
<dbReference type="Orphanet" id="3237">
    <property type="disease" value="Multiple synostoses syndrome"/>
</dbReference>
<dbReference type="Orphanet" id="3250">
    <property type="disease" value="Proximal symphalangism"/>
</dbReference>
<dbReference type="Orphanet" id="140917">
    <property type="disease" value="Stapes ankylosis with broad thumbs and toes"/>
</dbReference>
<dbReference type="Orphanet" id="1412">
    <property type="disease" value="Tarsal-carpal coalition syndrome"/>
</dbReference>
<dbReference type="PharmGKB" id="PA31670"/>
<dbReference type="VEuPathDB" id="HostDB:ENSG00000183691"/>
<dbReference type="eggNOG" id="KOG4485">
    <property type="taxonomic scope" value="Eukaryota"/>
</dbReference>
<dbReference type="GeneTree" id="ENSGT00390000006009"/>
<dbReference type="HOGENOM" id="CLU_085186_1_0_1"/>
<dbReference type="InParanoid" id="Q13253"/>
<dbReference type="OMA" id="LWSHTFC"/>
<dbReference type="OrthoDB" id="5950649at2759"/>
<dbReference type="PAN-GO" id="Q13253">
    <property type="GO annotations" value="4 GO annotations based on evolutionary models"/>
</dbReference>
<dbReference type="PhylomeDB" id="Q13253"/>
<dbReference type="TreeFam" id="TF353745"/>
<dbReference type="PathwayCommons" id="Q13253"/>
<dbReference type="Reactome" id="R-HSA-201451">
    <property type="pathway name" value="Signaling by BMP"/>
</dbReference>
<dbReference type="Reactome" id="R-HSA-9793380">
    <property type="pathway name" value="Formation of paraxial mesoderm"/>
</dbReference>
<dbReference type="SignaLink" id="Q13253"/>
<dbReference type="SIGNOR" id="Q13253"/>
<dbReference type="BioGRID-ORCS" id="9241">
    <property type="hits" value="15 hits in 1151 CRISPR screens"/>
</dbReference>
<dbReference type="ChiTaRS" id="NOG">
    <property type="organism name" value="human"/>
</dbReference>
<dbReference type="EvolutionaryTrace" id="Q13253"/>
<dbReference type="GeneWiki" id="Noggin_(protein)"/>
<dbReference type="GenomeRNAi" id="9241"/>
<dbReference type="Pharos" id="Q13253">
    <property type="development level" value="Tbio"/>
</dbReference>
<dbReference type="PRO" id="PR:Q13253"/>
<dbReference type="Proteomes" id="UP000005640">
    <property type="component" value="Chromosome 17"/>
</dbReference>
<dbReference type="RNAct" id="Q13253">
    <property type="molecule type" value="protein"/>
</dbReference>
<dbReference type="Bgee" id="ENSG00000183691">
    <property type="expression patterns" value="Expressed in pigmented layer of retina and 97 other cell types or tissues"/>
</dbReference>
<dbReference type="GO" id="GO:0005576">
    <property type="term" value="C:extracellular region"/>
    <property type="evidence" value="ECO:0000304"/>
    <property type="project" value="Reactome"/>
</dbReference>
<dbReference type="GO" id="GO:0005615">
    <property type="term" value="C:extracellular space"/>
    <property type="evidence" value="ECO:0000314"/>
    <property type="project" value="BHF-UCL"/>
</dbReference>
<dbReference type="GO" id="GO:0098793">
    <property type="term" value="C:presynapse"/>
    <property type="evidence" value="ECO:0007669"/>
    <property type="project" value="GOC"/>
</dbReference>
<dbReference type="GO" id="GO:0019955">
    <property type="term" value="F:cytokine binding"/>
    <property type="evidence" value="ECO:0000353"/>
    <property type="project" value="BHF-UCL"/>
</dbReference>
<dbReference type="GO" id="GO:0042803">
    <property type="term" value="F:protein homodimerization activity"/>
    <property type="evidence" value="ECO:0000314"/>
    <property type="project" value="BHF-UCL"/>
</dbReference>
<dbReference type="GO" id="GO:0055009">
    <property type="term" value="P:atrial cardiac muscle tissue morphogenesis"/>
    <property type="evidence" value="ECO:0000250"/>
    <property type="project" value="BHF-UCL"/>
</dbReference>
<dbReference type="GO" id="GO:0048318">
    <property type="term" value="P:axial mesoderm development"/>
    <property type="evidence" value="ECO:0007669"/>
    <property type="project" value="Ensembl"/>
</dbReference>
<dbReference type="GO" id="GO:0030509">
    <property type="term" value="P:BMP signaling pathway"/>
    <property type="evidence" value="ECO:0007669"/>
    <property type="project" value="Ensembl"/>
</dbReference>
<dbReference type="GO" id="GO:0051216">
    <property type="term" value="P:cartilage development"/>
    <property type="evidence" value="ECO:0007669"/>
    <property type="project" value="UniProtKB-KW"/>
</dbReference>
<dbReference type="GO" id="GO:0021533">
    <property type="term" value="P:cell differentiation in hindbrain"/>
    <property type="evidence" value="ECO:0000315"/>
    <property type="project" value="BHF-UCL"/>
</dbReference>
<dbReference type="GO" id="GO:1904888">
    <property type="term" value="P:cranial skeletal system development"/>
    <property type="evidence" value="ECO:0007669"/>
    <property type="project" value="Ensembl"/>
</dbReference>
<dbReference type="GO" id="GO:0009953">
    <property type="term" value="P:dorsal/ventral pattern formation"/>
    <property type="evidence" value="ECO:0000314"/>
    <property type="project" value="BHF-UCL"/>
</dbReference>
<dbReference type="GO" id="GO:0042733">
    <property type="term" value="P:embryonic digit morphogenesis"/>
    <property type="evidence" value="ECO:0000315"/>
    <property type="project" value="BHF-UCL"/>
</dbReference>
<dbReference type="GO" id="GO:0060272">
    <property type="term" value="P:embryonic skeletal joint morphogenesis"/>
    <property type="evidence" value="ECO:0000315"/>
    <property type="project" value="BHF-UCL"/>
</dbReference>
<dbReference type="GO" id="GO:0048706">
    <property type="term" value="P:embryonic skeletal system development"/>
    <property type="evidence" value="ECO:0000315"/>
    <property type="project" value="BHF-UCL"/>
</dbReference>
<dbReference type="GO" id="GO:0003272">
    <property type="term" value="P:endocardial cushion formation"/>
    <property type="evidence" value="ECO:0000250"/>
    <property type="project" value="BHF-UCL"/>
</dbReference>
<dbReference type="GO" id="GO:0001706">
    <property type="term" value="P:endoderm formation"/>
    <property type="evidence" value="ECO:0007669"/>
    <property type="project" value="Ensembl"/>
</dbReference>
<dbReference type="GO" id="GO:0050673">
    <property type="term" value="P:epithelial cell proliferation"/>
    <property type="evidence" value="ECO:0007669"/>
    <property type="project" value="Ensembl"/>
</dbReference>
<dbReference type="GO" id="GO:0001837">
    <property type="term" value="P:epithelial to mesenchymal transition"/>
    <property type="evidence" value="ECO:0000250"/>
    <property type="project" value="UniProtKB"/>
</dbReference>
<dbReference type="GO" id="GO:0035640">
    <property type="term" value="P:exploration behavior"/>
    <property type="evidence" value="ECO:0007669"/>
    <property type="project" value="Ensembl"/>
</dbReference>
<dbReference type="GO" id="GO:0060325">
    <property type="term" value="P:face morphogenesis"/>
    <property type="evidence" value="ECO:0007669"/>
    <property type="project" value="Ensembl"/>
</dbReference>
<dbReference type="GO" id="GO:0008543">
    <property type="term" value="P:fibroblast growth factor receptor signaling pathway"/>
    <property type="evidence" value="ECO:0007669"/>
    <property type="project" value="Ensembl"/>
</dbReference>
<dbReference type="GO" id="GO:0061384">
    <property type="term" value="P:heart trabecula morphogenesis"/>
    <property type="evidence" value="ECO:0000250"/>
    <property type="project" value="BHF-UCL"/>
</dbReference>
<dbReference type="GO" id="GO:0001701">
    <property type="term" value="P:in utero embryonic development"/>
    <property type="evidence" value="ECO:0007669"/>
    <property type="project" value="Ensembl"/>
</dbReference>
<dbReference type="GO" id="GO:0060173">
    <property type="term" value="P:limb development"/>
    <property type="evidence" value="ECO:0000315"/>
    <property type="project" value="BHF-UCL"/>
</dbReference>
<dbReference type="GO" id="GO:0060291">
    <property type="term" value="P:long-term synaptic potentiation"/>
    <property type="evidence" value="ECO:0007669"/>
    <property type="project" value="Ensembl"/>
</dbReference>
<dbReference type="GO" id="GO:0060425">
    <property type="term" value="P:lung morphogenesis"/>
    <property type="evidence" value="ECO:0007669"/>
    <property type="project" value="Ensembl"/>
</dbReference>
<dbReference type="GO" id="GO:0003149">
    <property type="term" value="P:membranous septum morphogenesis"/>
    <property type="evidence" value="ECO:0000250"/>
    <property type="project" value="BHF-UCL"/>
</dbReference>
<dbReference type="GO" id="GO:0001707">
    <property type="term" value="P:mesoderm formation"/>
    <property type="evidence" value="ECO:0007669"/>
    <property type="project" value="Ensembl"/>
</dbReference>
<dbReference type="GO" id="GO:0042474">
    <property type="term" value="P:middle ear morphogenesis"/>
    <property type="evidence" value="ECO:0000315"/>
    <property type="project" value="BHF-UCL"/>
</dbReference>
<dbReference type="GO" id="GO:0008045">
    <property type="term" value="P:motor neuron axon guidance"/>
    <property type="evidence" value="ECO:0007669"/>
    <property type="project" value="Ensembl"/>
</dbReference>
<dbReference type="GO" id="GO:2001234">
    <property type="term" value="P:negative regulation of apoptotic signaling pathway"/>
    <property type="evidence" value="ECO:0007669"/>
    <property type="project" value="Ensembl"/>
</dbReference>
<dbReference type="GO" id="GO:0048712">
    <property type="term" value="P:negative regulation of astrocyte differentiation"/>
    <property type="evidence" value="ECO:0000250"/>
    <property type="project" value="UniProtKB"/>
</dbReference>
<dbReference type="GO" id="GO:0030514">
    <property type="term" value="P:negative regulation of BMP signaling pathway"/>
    <property type="evidence" value="ECO:0000314"/>
    <property type="project" value="BHF-UCL"/>
</dbReference>
<dbReference type="GO" id="GO:0090090">
    <property type="term" value="P:negative regulation of canonical Wnt signaling pathway"/>
    <property type="evidence" value="ECO:0000314"/>
    <property type="project" value="BHF-UCL"/>
</dbReference>
<dbReference type="GO" id="GO:0062044">
    <property type="term" value="P:negative regulation of cardiac epithelial to mesenchymal transition"/>
    <property type="evidence" value="ECO:0000250"/>
    <property type="project" value="BHF-UCL"/>
</dbReference>
<dbReference type="GO" id="GO:0060044">
    <property type="term" value="P:negative regulation of cardiac muscle cell proliferation"/>
    <property type="evidence" value="ECO:0000250"/>
    <property type="project" value="UniProtKB"/>
</dbReference>
<dbReference type="GO" id="GO:0061037">
    <property type="term" value="P:negative regulation of cartilage development"/>
    <property type="evidence" value="ECO:0007669"/>
    <property type="project" value="Ensembl"/>
</dbReference>
<dbReference type="GO" id="GO:0030336">
    <property type="term" value="P:negative regulation of cell migration"/>
    <property type="evidence" value="ECO:0000314"/>
    <property type="project" value="BHF-UCL"/>
</dbReference>
<dbReference type="GO" id="GO:0060302">
    <property type="term" value="P:negative regulation of cytokine activity"/>
    <property type="evidence" value="ECO:0000314"/>
    <property type="project" value="BHF-UCL"/>
</dbReference>
<dbReference type="GO" id="GO:0010629">
    <property type="term" value="P:negative regulation of gene expression"/>
    <property type="evidence" value="ECO:0007669"/>
    <property type="project" value="Ensembl"/>
</dbReference>
<dbReference type="GO" id="GO:0045668">
    <property type="term" value="P:negative regulation of osteoblast differentiation"/>
    <property type="evidence" value="ECO:0000314"/>
    <property type="project" value="BHF-UCL"/>
</dbReference>
<dbReference type="GO" id="GO:0060392">
    <property type="term" value="P:negative regulation of SMAD protein signal transduction"/>
    <property type="evidence" value="ECO:0000314"/>
    <property type="project" value="BHF-UCL"/>
</dbReference>
<dbReference type="GO" id="GO:0000122">
    <property type="term" value="P:negative regulation of transcription by RNA polymerase II"/>
    <property type="evidence" value="ECO:0000250"/>
    <property type="project" value="BHF-UCL"/>
</dbReference>
<dbReference type="GO" id="GO:0007399">
    <property type="term" value="P:nervous system development"/>
    <property type="evidence" value="ECO:0000304"/>
    <property type="project" value="ProtInc"/>
</dbReference>
<dbReference type="GO" id="GO:0021999">
    <property type="term" value="P:neural plate anterior/posterior regionalization"/>
    <property type="evidence" value="ECO:0000315"/>
    <property type="project" value="BHF-UCL"/>
</dbReference>
<dbReference type="GO" id="GO:0001839">
    <property type="term" value="P:neural plate morphogenesis"/>
    <property type="evidence" value="ECO:0007669"/>
    <property type="project" value="Ensembl"/>
</dbReference>
<dbReference type="GO" id="GO:0001843">
    <property type="term" value="P:neural tube closure"/>
    <property type="evidence" value="ECO:0007669"/>
    <property type="project" value="Ensembl"/>
</dbReference>
<dbReference type="GO" id="GO:0038092">
    <property type="term" value="P:nodal signaling pathway"/>
    <property type="evidence" value="ECO:0000315"/>
    <property type="project" value="BHF-UCL"/>
</dbReference>
<dbReference type="GO" id="GO:0048570">
    <property type="term" value="P:notochord morphogenesis"/>
    <property type="evidence" value="ECO:0007669"/>
    <property type="project" value="Ensembl"/>
</dbReference>
<dbReference type="GO" id="GO:0001649">
    <property type="term" value="P:osteoblast differentiation"/>
    <property type="evidence" value="ECO:0000250"/>
    <property type="project" value="UniProtKB"/>
</dbReference>
<dbReference type="GO" id="GO:0003151">
    <property type="term" value="P:outflow tract morphogenesis"/>
    <property type="evidence" value="ECO:0000250"/>
    <property type="project" value="BHF-UCL"/>
</dbReference>
<dbReference type="GO" id="GO:0061626">
    <property type="term" value="P:pharyngeal arch artery morphogenesis"/>
    <property type="evidence" value="ECO:0000250"/>
    <property type="project" value="BHF-UCL"/>
</dbReference>
<dbReference type="GO" id="GO:0021983">
    <property type="term" value="P:pituitary gland development"/>
    <property type="evidence" value="ECO:0007669"/>
    <property type="project" value="Ensembl"/>
</dbReference>
<dbReference type="GO" id="GO:0090190">
    <property type="term" value="P:positive regulation of branching involved in ureteric bud morphogenesis"/>
    <property type="evidence" value="ECO:0000250"/>
    <property type="project" value="UniProtKB"/>
</dbReference>
<dbReference type="GO" id="GO:0050679">
    <property type="term" value="P:positive regulation of epithelial cell proliferation"/>
    <property type="evidence" value="ECO:0007669"/>
    <property type="project" value="Ensembl"/>
</dbReference>
<dbReference type="GO" id="GO:0010628">
    <property type="term" value="P:positive regulation of gene expression"/>
    <property type="evidence" value="ECO:0000250"/>
    <property type="project" value="BHF-UCL"/>
</dbReference>
<dbReference type="GO" id="GO:0090193">
    <property type="term" value="P:positive regulation of glomerulus development"/>
    <property type="evidence" value="ECO:0000250"/>
    <property type="project" value="UniProtKB"/>
</dbReference>
<dbReference type="GO" id="GO:0045944">
    <property type="term" value="P:positive regulation of transcription by RNA polymerase II"/>
    <property type="evidence" value="ECO:0007669"/>
    <property type="project" value="Ensembl"/>
</dbReference>
<dbReference type="GO" id="GO:0099171">
    <property type="term" value="P:presynaptic modulation of chemical synaptic transmission"/>
    <property type="evidence" value="ECO:0007669"/>
    <property type="project" value="Ensembl"/>
</dbReference>
<dbReference type="GO" id="GO:0060513">
    <property type="term" value="P:prostatic bud formation"/>
    <property type="evidence" value="ECO:0007669"/>
    <property type="project" value="Ensembl"/>
</dbReference>
<dbReference type="GO" id="GO:0040036">
    <property type="term" value="P:regulation of fibroblast growth factor receptor signaling pathway"/>
    <property type="evidence" value="ECO:0000315"/>
    <property type="project" value="BHF-UCL"/>
</dbReference>
<dbReference type="GO" id="GO:0048168">
    <property type="term" value="P:regulation of neuronal synaptic plasticity"/>
    <property type="evidence" value="ECO:0007669"/>
    <property type="project" value="Ensembl"/>
</dbReference>
<dbReference type="GO" id="GO:1990926">
    <property type="term" value="P:short-term synaptic potentiation"/>
    <property type="evidence" value="ECO:0007669"/>
    <property type="project" value="Ensembl"/>
</dbReference>
<dbReference type="GO" id="GO:0001501">
    <property type="term" value="P:skeletal system development"/>
    <property type="evidence" value="ECO:0000304"/>
    <property type="project" value="ProtInc"/>
</dbReference>
<dbReference type="GO" id="GO:0007224">
    <property type="term" value="P:smoothened signaling pathway"/>
    <property type="evidence" value="ECO:0007669"/>
    <property type="project" value="Ensembl"/>
</dbReference>
<dbReference type="GO" id="GO:0035019">
    <property type="term" value="P:somatic stem cell population maintenance"/>
    <property type="evidence" value="ECO:0000315"/>
    <property type="project" value="BHF-UCL"/>
</dbReference>
<dbReference type="GO" id="GO:0061053">
    <property type="term" value="P:somite development"/>
    <property type="evidence" value="ECO:0007669"/>
    <property type="project" value="Ensembl"/>
</dbReference>
<dbReference type="GO" id="GO:0021510">
    <property type="term" value="P:spinal cord development"/>
    <property type="evidence" value="ECO:0007669"/>
    <property type="project" value="Ensembl"/>
</dbReference>
<dbReference type="GO" id="GO:0048863">
    <property type="term" value="P:stem cell differentiation"/>
    <property type="evidence" value="ECO:0007669"/>
    <property type="project" value="Ensembl"/>
</dbReference>
<dbReference type="GO" id="GO:0060676">
    <property type="term" value="P:ureteric bud formation"/>
    <property type="evidence" value="ECO:0007669"/>
    <property type="project" value="Ensembl"/>
</dbReference>
<dbReference type="GO" id="GO:0003223">
    <property type="term" value="P:ventricular compact myocardium morphogenesis"/>
    <property type="evidence" value="ECO:0000250"/>
    <property type="project" value="BHF-UCL"/>
</dbReference>
<dbReference type="GO" id="GO:0060412">
    <property type="term" value="P:ventricular septum morphogenesis"/>
    <property type="evidence" value="ECO:0000250"/>
    <property type="project" value="BHF-UCL"/>
</dbReference>
<dbReference type="GO" id="GO:0008542">
    <property type="term" value="P:visual learning"/>
    <property type="evidence" value="ECO:0007669"/>
    <property type="project" value="Ensembl"/>
</dbReference>
<dbReference type="GO" id="GO:0042060">
    <property type="term" value="P:wound healing"/>
    <property type="evidence" value="ECO:0000250"/>
    <property type="project" value="UniProtKB"/>
</dbReference>
<dbReference type="FunFam" id="1.10.287.520:FF:000001">
    <property type="entry name" value="Noggin"/>
    <property type="match status" value="1"/>
</dbReference>
<dbReference type="Gene3D" id="2.10.90.10">
    <property type="entry name" value="Cystine-knot cytokines"/>
    <property type="match status" value="1"/>
</dbReference>
<dbReference type="Gene3D" id="1.10.287.520">
    <property type="entry name" value="Helix hairpin bin"/>
    <property type="match status" value="1"/>
</dbReference>
<dbReference type="InterPro" id="IPR029034">
    <property type="entry name" value="Cystine-knot_cytokine"/>
</dbReference>
<dbReference type="InterPro" id="IPR008717">
    <property type="entry name" value="Noggin"/>
</dbReference>
<dbReference type="PANTHER" id="PTHR10494">
    <property type="entry name" value="BONE MORPHOGENETIC PROTEIN INHIBITOR, NOGGIN"/>
    <property type="match status" value="1"/>
</dbReference>
<dbReference type="PANTHER" id="PTHR10494:SF5">
    <property type="entry name" value="NOGGIN"/>
    <property type="match status" value="1"/>
</dbReference>
<dbReference type="Pfam" id="PF05806">
    <property type="entry name" value="Noggin"/>
    <property type="match status" value="1"/>
</dbReference>
<dbReference type="PIRSF" id="PIRSF008129">
    <property type="entry name" value="Noggin"/>
    <property type="match status" value="1"/>
</dbReference>
<dbReference type="SUPFAM" id="SSF57501">
    <property type="entry name" value="Cystine-knot cytokines"/>
    <property type="match status" value="1"/>
</dbReference>